<protein>
    <recommendedName>
        <fullName>Chromatin structure-remodeling complex subunit SFH1</fullName>
    </recommendedName>
    <alternativeName>
        <fullName>RSC complex subunit SFH1</fullName>
    </alternativeName>
    <alternativeName>
        <fullName>SNF5 homolog 1</fullName>
    </alternativeName>
</protein>
<accession>Q6FTV3</accession>
<sequence length="403" mass="44819">MSNRAVPQGYLANLQFRIRSDNLPLLSTVQPSRGHKRGGRAVNYAEFDNELLEDFSNFPTFDIDSDSNDEEQSSASAGNDDPQANANGGEAAGVNGQGSGDGGSANTGAGRHGKSQLTAEMEKNYKTGVPDLNEQKDSLNVLRYQKIRESFQHGKIAVPYRLYVPPELSTGQQEAILIPITLNVEHGNNTISDAFVWNVNDTSISVEDFVTTYCNDLGLYGNVSLHSQIVSSINEQIQELENVASLVIPDLEVVVNLTCTIQGKFFEDYFQWNLSDKSLSPEKFALIIVADLGLAREFAPGIAHSLHEYLLHVKKEWAEGSLHQDTVPNEAAFGYLAGVRLNIDDLGAKWAPKVEYLTQEEIQKREIEKERNMRRLKRESDRMGGGARRGRRRLDDLELTMKM</sequence>
<comment type="function">
    <text evidence="1">Part of the chromatin structure-remodeling complex (RSC) which is involved in transcription regulation and nucleosome positioning. RSC is responsible for the transfer of a histone octamer from a nucleosome core particle to naked DNA. The reaction requires ATP and involves an activated RSC-nucleosome intermediate. Remodeling reaction also involves DNA translocation, DNA twist and conformational change. As a reconfigurer of centromeric and flanking nucleosomes, RSC complex is required both for proper kinetochore function in chromosome segregation and, via a PKC1-dependent signaling pathway, for organization of the cellular cytoskeleton. This subunit is essential for mitotic growth and required for cell cycle progression (By similarity).</text>
</comment>
<comment type="subcellular location">
    <subcellularLocation>
        <location evidence="2">Nucleus</location>
    </subcellularLocation>
</comment>
<comment type="similarity">
    <text evidence="4">Belongs to the SNF5 family.</text>
</comment>
<dbReference type="EMBL" id="CR380952">
    <property type="protein sequence ID" value="CAG59265.1"/>
    <property type="molecule type" value="Genomic_DNA"/>
</dbReference>
<dbReference type="RefSeq" id="XP_446341.1">
    <property type="nucleotide sequence ID" value="XM_446341.1"/>
</dbReference>
<dbReference type="SMR" id="Q6FTV3"/>
<dbReference type="FunCoup" id="Q6FTV3">
    <property type="interactions" value="265"/>
</dbReference>
<dbReference type="STRING" id="284593.Q6FTV3"/>
<dbReference type="EnsemblFungi" id="CAGL0F08569g-T">
    <property type="protein sequence ID" value="CAGL0F08569g-T-p1"/>
    <property type="gene ID" value="CAGL0F08569g"/>
</dbReference>
<dbReference type="KEGG" id="cgr:2887854"/>
<dbReference type="CGD" id="CAL0129348">
    <property type="gene designation" value="CAGL0F08569g"/>
</dbReference>
<dbReference type="VEuPathDB" id="FungiDB:CAGL0F08569g"/>
<dbReference type="eggNOG" id="KOG1649">
    <property type="taxonomic scope" value="Eukaryota"/>
</dbReference>
<dbReference type="HOGENOM" id="CLU_014421_4_0_1"/>
<dbReference type="InParanoid" id="Q6FTV3"/>
<dbReference type="OMA" id="NFHNRIR"/>
<dbReference type="Proteomes" id="UP000002428">
    <property type="component" value="Chromosome F"/>
</dbReference>
<dbReference type="GO" id="GO:0000228">
    <property type="term" value="C:nuclear chromosome"/>
    <property type="evidence" value="ECO:0007669"/>
    <property type="project" value="InterPro"/>
</dbReference>
<dbReference type="GO" id="GO:0016586">
    <property type="term" value="C:RSC-type complex"/>
    <property type="evidence" value="ECO:0007669"/>
    <property type="project" value="EnsemblFungi"/>
</dbReference>
<dbReference type="GO" id="GO:0031491">
    <property type="term" value="F:nucleosome binding"/>
    <property type="evidence" value="ECO:0007669"/>
    <property type="project" value="EnsemblFungi"/>
</dbReference>
<dbReference type="GO" id="GO:0031055">
    <property type="term" value="P:chromatin remodeling at centromere"/>
    <property type="evidence" value="ECO:0007669"/>
    <property type="project" value="EnsemblFungi"/>
</dbReference>
<dbReference type="GO" id="GO:0007059">
    <property type="term" value="P:chromosome segregation"/>
    <property type="evidence" value="ECO:0007669"/>
    <property type="project" value="EnsemblFungi"/>
</dbReference>
<dbReference type="GO" id="GO:0006302">
    <property type="term" value="P:double-strand break repair"/>
    <property type="evidence" value="ECO:0007669"/>
    <property type="project" value="EnsemblFungi"/>
</dbReference>
<dbReference type="GO" id="GO:0000086">
    <property type="term" value="P:G2/M transition of mitotic cell cycle"/>
    <property type="evidence" value="ECO:0007669"/>
    <property type="project" value="EnsemblFungi"/>
</dbReference>
<dbReference type="GO" id="GO:0006337">
    <property type="term" value="P:nucleosome disassembly"/>
    <property type="evidence" value="ECO:0007669"/>
    <property type="project" value="EnsemblFungi"/>
</dbReference>
<dbReference type="GO" id="GO:0033262">
    <property type="term" value="P:regulation of nuclear cell cycle DNA replication"/>
    <property type="evidence" value="ECO:0007669"/>
    <property type="project" value="EnsemblFungi"/>
</dbReference>
<dbReference type="GO" id="GO:0006368">
    <property type="term" value="P:transcription elongation by RNA polymerase II"/>
    <property type="evidence" value="ECO:0007669"/>
    <property type="project" value="EnsemblFungi"/>
</dbReference>
<dbReference type="InterPro" id="IPR017393">
    <property type="entry name" value="Sfh1/SNF5"/>
</dbReference>
<dbReference type="InterPro" id="IPR006939">
    <property type="entry name" value="SNF5"/>
</dbReference>
<dbReference type="PANTHER" id="PTHR10019">
    <property type="entry name" value="SNF5"/>
    <property type="match status" value="1"/>
</dbReference>
<dbReference type="Pfam" id="PF04855">
    <property type="entry name" value="SNF5"/>
    <property type="match status" value="2"/>
</dbReference>
<dbReference type="PIRSF" id="PIRSF038126">
    <property type="entry name" value="SWI_SNF"/>
    <property type="match status" value="1"/>
</dbReference>
<keyword id="KW-0131">Cell cycle</keyword>
<keyword id="KW-0156">Chromatin regulator</keyword>
<keyword id="KW-0539">Nucleus</keyword>
<keyword id="KW-1185">Reference proteome</keyword>
<keyword id="KW-0804">Transcription</keyword>
<keyword id="KW-0805">Transcription regulation</keyword>
<proteinExistence type="inferred from homology"/>
<organism>
    <name type="scientific">Candida glabrata (strain ATCC 2001 / BCRC 20586 / JCM 3761 / NBRC 0622 / NRRL Y-65 / CBS 138)</name>
    <name type="common">Yeast</name>
    <name type="synonym">Nakaseomyces glabratus</name>
    <dbReference type="NCBI Taxonomy" id="284593"/>
    <lineage>
        <taxon>Eukaryota</taxon>
        <taxon>Fungi</taxon>
        <taxon>Dikarya</taxon>
        <taxon>Ascomycota</taxon>
        <taxon>Saccharomycotina</taxon>
        <taxon>Saccharomycetes</taxon>
        <taxon>Saccharomycetales</taxon>
        <taxon>Saccharomycetaceae</taxon>
        <taxon>Nakaseomyces</taxon>
    </lineage>
</organism>
<name>SFH1_CANGA</name>
<evidence type="ECO:0000250" key="1"/>
<evidence type="ECO:0000250" key="2">
    <source>
        <dbReference type="UniProtKB" id="Q9USM3"/>
    </source>
</evidence>
<evidence type="ECO:0000256" key="3">
    <source>
        <dbReference type="SAM" id="MobiDB-lite"/>
    </source>
</evidence>
<evidence type="ECO:0000305" key="4"/>
<gene>
    <name type="primary">SFH1</name>
    <name type="ordered locus">CAGL0F08569g</name>
</gene>
<reference key="1">
    <citation type="journal article" date="2004" name="Nature">
        <title>Genome evolution in yeasts.</title>
        <authorList>
            <person name="Dujon B."/>
            <person name="Sherman D."/>
            <person name="Fischer G."/>
            <person name="Durrens P."/>
            <person name="Casaregola S."/>
            <person name="Lafontaine I."/>
            <person name="de Montigny J."/>
            <person name="Marck C."/>
            <person name="Neuveglise C."/>
            <person name="Talla E."/>
            <person name="Goffard N."/>
            <person name="Frangeul L."/>
            <person name="Aigle M."/>
            <person name="Anthouard V."/>
            <person name="Babour A."/>
            <person name="Barbe V."/>
            <person name="Barnay S."/>
            <person name="Blanchin S."/>
            <person name="Beckerich J.-M."/>
            <person name="Beyne E."/>
            <person name="Bleykasten C."/>
            <person name="Boisrame A."/>
            <person name="Boyer J."/>
            <person name="Cattolico L."/>
            <person name="Confanioleri F."/>
            <person name="de Daruvar A."/>
            <person name="Despons L."/>
            <person name="Fabre E."/>
            <person name="Fairhead C."/>
            <person name="Ferry-Dumazet H."/>
            <person name="Groppi A."/>
            <person name="Hantraye F."/>
            <person name="Hennequin C."/>
            <person name="Jauniaux N."/>
            <person name="Joyet P."/>
            <person name="Kachouri R."/>
            <person name="Kerrest A."/>
            <person name="Koszul R."/>
            <person name="Lemaire M."/>
            <person name="Lesur I."/>
            <person name="Ma L."/>
            <person name="Muller H."/>
            <person name="Nicaud J.-M."/>
            <person name="Nikolski M."/>
            <person name="Oztas S."/>
            <person name="Ozier-Kalogeropoulos O."/>
            <person name="Pellenz S."/>
            <person name="Potier S."/>
            <person name="Richard G.-F."/>
            <person name="Straub M.-L."/>
            <person name="Suleau A."/>
            <person name="Swennen D."/>
            <person name="Tekaia F."/>
            <person name="Wesolowski-Louvel M."/>
            <person name="Westhof E."/>
            <person name="Wirth B."/>
            <person name="Zeniou-Meyer M."/>
            <person name="Zivanovic Y."/>
            <person name="Bolotin-Fukuhara M."/>
            <person name="Thierry A."/>
            <person name="Bouchier C."/>
            <person name="Caudron B."/>
            <person name="Scarpelli C."/>
            <person name="Gaillardin C."/>
            <person name="Weissenbach J."/>
            <person name="Wincker P."/>
            <person name="Souciet J.-L."/>
        </authorList>
    </citation>
    <scope>NUCLEOTIDE SEQUENCE [LARGE SCALE GENOMIC DNA]</scope>
    <source>
        <strain>ATCC 2001 / BCRC 20586 / JCM 3761 / NBRC 0622 / NRRL Y-65 / CBS 138</strain>
    </source>
</reference>
<feature type="chain" id="PRO_0000205958" description="Chromatin structure-remodeling complex subunit SFH1">
    <location>
        <begin position="1"/>
        <end position="403"/>
    </location>
</feature>
<feature type="region of interest" description="Disordered" evidence="3">
    <location>
        <begin position="58"/>
        <end position="115"/>
    </location>
</feature>
<feature type="compositionally biased region" description="Acidic residues" evidence="3">
    <location>
        <begin position="63"/>
        <end position="72"/>
    </location>
</feature>
<feature type="compositionally biased region" description="Low complexity" evidence="3">
    <location>
        <begin position="84"/>
        <end position="94"/>
    </location>
</feature>
<feature type="compositionally biased region" description="Gly residues" evidence="3">
    <location>
        <begin position="95"/>
        <end position="105"/>
    </location>
</feature>